<reference key="1">
    <citation type="journal article" date="2001" name="Proc. Natl. Acad. Sci. U.S.A.">
        <title>Analysis of the chromosome sequence of the legume symbiont Sinorhizobium meliloti strain 1021.</title>
        <authorList>
            <person name="Capela D."/>
            <person name="Barloy-Hubler F."/>
            <person name="Gouzy J."/>
            <person name="Bothe G."/>
            <person name="Ampe F."/>
            <person name="Batut J."/>
            <person name="Boistard P."/>
            <person name="Becker A."/>
            <person name="Boutry M."/>
            <person name="Cadieu E."/>
            <person name="Dreano S."/>
            <person name="Gloux S."/>
            <person name="Godrie T."/>
            <person name="Goffeau A."/>
            <person name="Kahn D."/>
            <person name="Kiss E."/>
            <person name="Lelaure V."/>
            <person name="Masuy D."/>
            <person name="Pohl T."/>
            <person name="Portetelle D."/>
            <person name="Puehler A."/>
            <person name="Purnelle B."/>
            <person name="Ramsperger U."/>
            <person name="Renard C."/>
            <person name="Thebault P."/>
            <person name="Vandenbol M."/>
            <person name="Weidner S."/>
            <person name="Galibert F."/>
        </authorList>
    </citation>
    <scope>NUCLEOTIDE SEQUENCE [LARGE SCALE GENOMIC DNA]</scope>
    <source>
        <strain>1021</strain>
    </source>
</reference>
<reference key="2">
    <citation type="journal article" date="2001" name="Science">
        <title>The composite genome of the legume symbiont Sinorhizobium meliloti.</title>
        <authorList>
            <person name="Galibert F."/>
            <person name="Finan T.M."/>
            <person name="Long S.R."/>
            <person name="Puehler A."/>
            <person name="Abola P."/>
            <person name="Ampe F."/>
            <person name="Barloy-Hubler F."/>
            <person name="Barnett M.J."/>
            <person name="Becker A."/>
            <person name="Boistard P."/>
            <person name="Bothe G."/>
            <person name="Boutry M."/>
            <person name="Bowser L."/>
            <person name="Buhrmester J."/>
            <person name="Cadieu E."/>
            <person name="Capela D."/>
            <person name="Chain P."/>
            <person name="Cowie A."/>
            <person name="Davis R.W."/>
            <person name="Dreano S."/>
            <person name="Federspiel N.A."/>
            <person name="Fisher R.F."/>
            <person name="Gloux S."/>
            <person name="Godrie T."/>
            <person name="Goffeau A."/>
            <person name="Golding B."/>
            <person name="Gouzy J."/>
            <person name="Gurjal M."/>
            <person name="Hernandez-Lucas I."/>
            <person name="Hong A."/>
            <person name="Huizar L."/>
            <person name="Hyman R.W."/>
            <person name="Jones T."/>
            <person name="Kahn D."/>
            <person name="Kahn M.L."/>
            <person name="Kalman S."/>
            <person name="Keating D.H."/>
            <person name="Kiss E."/>
            <person name="Komp C."/>
            <person name="Lelaure V."/>
            <person name="Masuy D."/>
            <person name="Palm C."/>
            <person name="Peck M.C."/>
            <person name="Pohl T.M."/>
            <person name="Portetelle D."/>
            <person name="Purnelle B."/>
            <person name="Ramsperger U."/>
            <person name="Surzycki R."/>
            <person name="Thebault P."/>
            <person name="Vandenbol M."/>
            <person name="Vorhoelter F.J."/>
            <person name="Weidner S."/>
            <person name="Wells D.H."/>
            <person name="Wong K."/>
            <person name="Yeh K.-C."/>
            <person name="Batut J."/>
        </authorList>
    </citation>
    <scope>NUCLEOTIDE SEQUENCE [LARGE SCALE GENOMIC DNA]</scope>
    <source>
        <strain>1021</strain>
    </source>
</reference>
<name>IF1_RHIME</name>
<feature type="chain" id="PRO_0000095850" description="Translation initiation factor IF-1">
    <location>
        <begin position="1"/>
        <end position="72"/>
    </location>
</feature>
<feature type="domain" description="S1-like" evidence="1">
    <location>
        <begin position="1"/>
        <end position="72"/>
    </location>
</feature>
<sequence>MAKEEVLEFPGVVTELLPNATFRVKLENEHEIIAHTAGRMRKNRIRVLAGDKVLVEMTPYDLTKGRITYRFK</sequence>
<proteinExistence type="inferred from homology"/>
<dbReference type="EMBL" id="AL591688">
    <property type="protein sequence ID" value="CAC45186.1"/>
    <property type="molecule type" value="Genomic_DNA"/>
</dbReference>
<dbReference type="RefSeq" id="NP_384720.1">
    <property type="nucleotide sequence ID" value="NC_003047.1"/>
</dbReference>
<dbReference type="RefSeq" id="WP_004435948.1">
    <property type="nucleotide sequence ID" value="NC_003047.1"/>
</dbReference>
<dbReference type="SMR" id="Q92S23"/>
<dbReference type="EnsemblBacteria" id="CAC45186">
    <property type="protein sequence ID" value="CAC45186"/>
    <property type="gene ID" value="SMc02310"/>
</dbReference>
<dbReference type="GeneID" id="89574917"/>
<dbReference type="KEGG" id="sme:SMc02310"/>
<dbReference type="PATRIC" id="fig|266834.11.peg.1987"/>
<dbReference type="eggNOG" id="COG0361">
    <property type="taxonomic scope" value="Bacteria"/>
</dbReference>
<dbReference type="HOGENOM" id="CLU_151267_1_0_5"/>
<dbReference type="OrthoDB" id="9803250at2"/>
<dbReference type="PRO" id="PR:Q92S23"/>
<dbReference type="Proteomes" id="UP000001976">
    <property type="component" value="Chromosome"/>
</dbReference>
<dbReference type="GO" id="GO:0005829">
    <property type="term" value="C:cytosol"/>
    <property type="evidence" value="ECO:0007669"/>
    <property type="project" value="TreeGrafter"/>
</dbReference>
<dbReference type="GO" id="GO:0043022">
    <property type="term" value="F:ribosome binding"/>
    <property type="evidence" value="ECO:0007669"/>
    <property type="project" value="UniProtKB-UniRule"/>
</dbReference>
<dbReference type="GO" id="GO:0019843">
    <property type="term" value="F:rRNA binding"/>
    <property type="evidence" value="ECO:0007669"/>
    <property type="project" value="UniProtKB-UniRule"/>
</dbReference>
<dbReference type="GO" id="GO:0003743">
    <property type="term" value="F:translation initiation factor activity"/>
    <property type="evidence" value="ECO:0007669"/>
    <property type="project" value="UniProtKB-UniRule"/>
</dbReference>
<dbReference type="CDD" id="cd04451">
    <property type="entry name" value="S1_IF1"/>
    <property type="match status" value="1"/>
</dbReference>
<dbReference type="FunFam" id="2.40.50.140:FF:000002">
    <property type="entry name" value="Translation initiation factor IF-1"/>
    <property type="match status" value="1"/>
</dbReference>
<dbReference type="Gene3D" id="2.40.50.140">
    <property type="entry name" value="Nucleic acid-binding proteins"/>
    <property type="match status" value="1"/>
</dbReference>
<dbReference type="HAMAP" id="MF_00075">
    <property type="entry name" value="IF_1"/>
    <property type="match status" value="1"/>
</dbReference>
<dbReference type="InterPro" id="IPR012340">
    <property type="entry name" value="NA-bd_OB-fold"/>
</dbReference>
<dbReference type="InterPro" id="IPR006196">
    <property type="entry name" value="RNA-binding_domain_S1_IF1"/>
</dbReference>
<dbReference type="InterPro" id="IPR004368">
    <property type="entry name" value="TIF_IF1"/>
</dbReference>
<dbReference type="NCBIfam" id="TIGR00008">
    <property type="entry name" value="infA"/>
    <property type="match status" value="1"/>
</dbReference>
<dbReference type="PANTHER" id="PTHR33370">
    <property type="entry name" value="TRANSLATION INITIATION FACTOR IF-1, CHLOROPLASTIC"/>
    <property type="match status" value="1"/>
</dbReference>
<dbReference type="PANTHER" id="PTHR33370:SF1">
    <property type="entry name" value="TRANSLATION INITIATION FACTOR IF-1, CHLOROPLASTIC"/>
    <property type="match status" value="1"/>
</dbReference>
<dbReference type="Pfam" id="PF01176">
    <property type="entry name" value="eIF-1a"/>
    <property type="match status" value="1"/>
</dbReference>
<dbReference type="SUPFAM" id="SSF50249">
    <property type="entry name" value="Nucleic acid-binding proteins"/>
    <property type="match status" value="1"/>
</dbReference>
<dbReference type="PROSITE" id="PS50832">
    <property type="entry name" value="S1_IF1_TYPE"/>
    <property type="match status" value="1"/>
</dbReference>
<gene>
    <name evidence="1" type="primary">infA</name>
    <name type="ordered locus">R00614</name>
    <name type="ORF">SMc02310</name>
</gene>
<organism>
    <name type="scientific">Rhizobium meliloti (strain 1021)</name>
    <name type="common">Ensifer meliloti</name>
    <name type="synonym">Sinorhizobium meliloti</name>
    <dbReference type="NCBI Taxonomy" id="266834"/>
    <lineage>
        <taxon>Bacteria</taxon>
        <taxon>Pseudomonadati</taxon>
        <taxon>Pseudomonadota</taxon>
        <taxon>Alphaproteobacteria</taxon>
        <taxon>Hyphomicrobiales</taxon>
        <taxon>Rhizobiaceae</taxon>
        <taxon>Sinorhizobium/Ensifer group</taxon>
        <taxon>Sinorhizobium</taxon>
    </lineage>
</organism>
<accession>Q92S23</accession>
<comment type="function">
    <text evidence="1">One of the essential components for the initiation of protein synthesis. Stabilizes the binding of IF-2 and IF-3 on the 30S subunit to which N-formylmethionyl-tRNA(fMet) subsequently binds. Helps modulate mRNA selection, yielding the 30S pre-initiation complex (PIC). Upon addition of the 50S ribosomal subunit IF-1, IF-2 and IF-3 are released leaving the mature 70S translation initiation complex.</text>
</comment>
<comment type="subunit">
    <text evidence="1">Component of the 30S ribosomal translation pre-initiation complex which assembles on the 30S ribosome in the order IF-2 and IF-3, IF-1 and N-formylmethionyl-tRNA(fMet); mRNA recruitment can occur at any time during PIC assembly.</text>
</comment>
<comment type="subcellular location">
    <subcellularLocation>
        <location evidence="1">Cytoplasm</location>
    </subcellularLocation>
</comment>
<comment type="similarity">
    <text evidence="1">Belongs to the IF-1 family.</text>
</comment>
<keyword id="KW-0963">Cytoplasm</keyword>
<keyword id="KW-0396">Initiation factor</keyword>
<keyword id="KW-0648">Protein biosynthesis</keyword>
<keyword id="KW-1185">Reference proteome</keyword>
<keyword id="KW-0694">RNA-binding</keyword>
<keyword id="KW-0699">rRNA-binding</keyword>
<evidence type="ECO:0000255" key="1">
    <source>
        <dbReference type="HAMAP-Rule" id="MF_00075"/>
    </source>
</evidence>
<protein>
    <recommendedName>
        <fullName evidence="1">Translation initiation factor IF-1</fullName>
    </recommendedName>
</protein>